<name>MTRX_AMPV1</name>
<gene>
    <name type="primary">M</name>
</gene>
<dbReference type="EMBL" id="DQ009484">
    <property type="protein sequence ID" value="AAY81656.1"/>
    <property type="molecule type" value="Viral_cRNA"/>
</dbReference>
<dbReference type="RefSeq" id="YP_443839.1">
    <property type="nucleotide sequence ID" value="NC_007652.1"/>
</dbReference>
<dbReference type="SMR" id="Q2Y2M4"/>
<dbReference type="Proteomes" id="UP000002471">
    <property type="component" value="Segment"/>
</dbReference>
<dbReference type="GO" id="GO:0030430">
    <property type="term" value="C:host cell cytoplasm"/>
    <property type="evidence" value="ECO:0007669"/>
    <property type="project" value="UniProtKB-SubCell"/>
</dbReference>
<dbReference type="GO" id="GO:0042025">
    <property type="term" value="C:host cell nucleus"/>
    <property type="evidence" value="ECO:0007669"/>
    <property type="project" value="UniProtKB-SubCell"/>
</dbReference>
<dbReference type="GO" id="GO:0020002">
    <property type="term" value="C:host cell plasma membrane"/>
    <property type="evidence" value="ECO:0007669"/>
    <property type="project" value="UniProtKB-SubCell"/>
</dbReference>
<dbReference type="GO" id="GO:0016020">
    <property type="term" value="C:membrane"/>
    <property type="evidence" value="ECO:0007669"/>
    <property type="project" value="UniProtKB-KW"/>
</dbReference>
<dbReference type="GO" id="GO:0019031">
    <property type="term" value="C:viral envelope"/>
    <property type="evidence" value="ECO:0007669"/>
    <property type="project" value="InterPro"/>
</dbReference>
<dbReference type="GO" id="GO:0039660">
    <property type="term" value="F:structural constituent of virion"/>
    <property type="evidence" value="ECO:0007669"/>
    <property type="project" value="UniProtKB-KW"/>
</dbReference>
<dbReference type="GO" id="GO:0019068">
    <property type="term" value="P:virion assembly"/>
    <property type="evidence" value="ECO:0007669"/>
    <property type="project" value="InterPro"/>
</dbReference>
<dbReference type="Gene3D" id="2.70.20.30">
    <property type="entry name" value="HRSV-S2 matrix protein, N-terminal domain"/>
    <property type="match status" value="1"/>
</dbReference>
<dbReference type="InterPro" id="IPR055461">
    <property type="entry name" value="Matrix_Pneumo_C"/>
</dbReference>
<dbReference type="InterPro" id="IPR005056">
    <property type="entry name" value="MATRX_N_pneumovirus"/>
</dbReference>
<dbReference type="InterPro" id="IPR043062">
    <property type="entry name" value="Pneu_matrix_N"/>
</dbReference>
<dbReference type="Pfam" id="PF23766">
    <property type="entry name" value="Matrix_Pneumo_C"/>
    <property type="match status" value="1"/>
</dbReference>
<dbReference type="Pfam" id="PF03393">
    <property type="entry name" value="Matrix_Pneumo_N"/>
    <property type="match status" value="1"/>
</dbReference>
<accession>Q2Y2M4</accession>
<organism>
    <name type="scientific">Avian metapneumovirus (isolate Canada goose/Minnesota/15a/2001)</name>
    <name type="common">AMPV</name>
    <dbReference type="NCBI Taxonomy" id="652954"/>
    <lineage>
        <taxon>Viruses</taxon>
        <taxon>Riboviria</taxon>
        <taxon>Orthornavirae</taxon>
        <taxon>Negarnaviricota</taxon>
        <taxon>Haploviricotina</taxon>
        <taxon>Monjiviricetes</taxon>
        <taxon>Mononegavirales</taxon>
        <taxon>Pneumoviridae</taxon>
        <taxon>Metapneumovirus</taxon>
        <taxon>Metapneumovirus avis</taxon>
    </lineage>
</organism>
<keyword id="KW-1032">Host cell membrane</keyword>
<keyword id="KW-1035">Host cytoplasm</keyword>
<keyword id="KW-1043">Host membrane</keyword>
<keyword id="KW-1048">Host nucleus</keyword>
<keyword id="KW-0945">Host-virus interaction</keyword>
<keyword id="KW-0472">Membrane</keyword>
<keyword id="KW-1185">Reference proteome</keyword>
<keyword id="KW-0468">Viral matrix protein</keyword>
<keyword id="KW-0946">Virion</keyword>
<organismHost>
    <name type="scientific">Anser sp.</name>
    <name type="common">goose</name>
    <dbReference type="NCBI Taxonomy" id="8847"/>
</organismHost>
<organismHost>
    <name type="scientific">Meleagris gallopavo</name>
    <name type="common">Wild turkey</name>
    <dbReference type="NCBI Taxonomy" id="9103"/>
</organismHost>
<reference key="1">
    <citation type="journal article" date="2004" name="Avian Dis.">
        <title>Evidence of avian pneumovirus spread beyond Minnesota among wild and domestic birds in central North America.</title>
        <authorList>
            <person name="Bennett R.S."/>
            <person name="Nezworski J."/>
            <person name="Velayudhan B.T."/>
            <person name="Nagaraja K.V."/>
            <person name="Zeman D.H."/>
            <person name="Dyer N."/>
            <person name="Graham T."/>
            <person name="Lauer D.C."/>
            <person name="Njenga M.K."/>
            <person name="Halvorson D.A."/>
        </authorList>
    </citation>
    <scope>NUCLEOTIDE SEQUENCE [GENOMIC RNA]</scope>
</reference>
<reference key="2">
    <citation type="journal article" date="2005" name="J. Virol.">
        <title>A wild goose metapneumovirus containing a large attachment glycoprotein is avirulent but immunoprotective in domestic turkeys.</title>
        <authorList>
            <person name="Bennett R.S."/>
            <person name="LaRue R."/>
            <person name="Shaw D."/>
            <person name="Yu Q."/>
            <person name="Nagaraja K.V."/>
            <person name="Halvorson D.A."/>
            <person name="Njenga M.K."/>
        </authorList>
    </citation>
    <scope>NUCLEOTIDE SEQUENCE [GENOMIC RNA]</scope>
</reference>
<protein>
    <recommendedName>
        <fullName>Matrix protein</fullName>
    </recommendedName>
</protein>
<evidence type="ECO:0000250" key="1"/>
<evidence type="ECO:0000305" key="2"/>
<comment type="function">
    <text evidence="1">Has a crucial role in virus assembly and budding. The matrix interacts with the RNP complex and this association serves two functions: facilitate virion assembly and inhibit the viral transcriptase activity. Early in infection, M is localized to the nucleus and may inhibit host cell transcription. Later on, M can associate with lipid rafts supposely by interacting with the cytoskeleton and with the cytoplasmic tail of glycoprotein G. The binding of M to host membrane is stabilized by the surface expression of the viral glycoproteins. These interactions may allow virus formation by mediating association of the nucleocapsid with the nascent envelope (By similarity).</text>
</comment>
<comment type="subunit">
    <text evidence="1">Interacts with glycoprotein G (via N-terminus), and protein N. Interacts with protein M2-1; this interaction mediates the association between proteins M and N (By similarity).</text>
</comment>
<comment type="subcellular location">
    <subcellularLocation>
        <location evidence="1">Virion</location>
    </subcellularLocation>
    <subcellularLocation>
        <location evidence="1">Host cytoplasm</location>
    </subcellularLocation>
    <subcellularLocation>
        <location evidence="1">Host nucleus</location>
    </subcellularLocation>
    <subcellularLocation>
        <location evidence="1">Host cell membrane</location>
        <topology evidence="1">Peripheral membrane protein</topology>
        <orientation evidence="1">Cytoplasmic side</orientation>
    </subcellularLocation>
    <text evidence="1">During bud formation, associates at the inner side of the plasma membrane of infected cells.</text>
</comment>
<comment type="similarity">
    <text evidence="2">Belongs to the paramyxoviruses M protein family.</text>
</comment>
<sequence length="254" mass="27622">MESYLVDTYQGVPYTAAVQTDLVEKDQLPARLTVWFPLFQTNTPPTVLLEQLKTLTITTLYTASQNGPILKVNASAQGAAMSALPKSFDVSASVALDDYSKLEFDKLTVCELKAVYLTTMKPYGMVSKFVNSAKAVGKKTHDLIALCDFLDLEKGVPVTIPAYIKSVSIKESESATVEAAIGGEADQAITQARIAPYAGLIMIMTMNNPKGIFKKLGAGVQVIVELGAYVQAESISRICRNWSHQGTRYVLKSR</sequence>
<feature type="chain" id="PRO_0000390369" description="Matrix protein">
    <location>
        <begin position="1"/>
        <end position="254"/>
    </location>
</feature>
<proteinExistence type="inferred from homology"/>